<reference key="1">
    <citation type="submission" date="2007-03" db="EMBL/GenBank/DDBJ databases">
        <title>Sequencing analysis of Lobularia maritima chloroplast DNA.</title>
        <authorList>
            <person name="Hosouchi T."/>
            <person name="Tsuruoka H."/>
            <person name="Kotani H."/>
        </authorList>
    </citation>
    <scope>NUCLEOTIDE SEQUENCE [LARGE SCALE GENOMIC DNA]</scope>
</reference>
<feature type="chain" id="PRO_0000360266" description="NAD(P)H-quinone oxidoreductase subunit 6, chloroplastic">
    <location>
        <begin position="1"/>
        <end position="176"/>
    </location>
</feature>
<feature type="transmembrane region" description="Helical" evidence="2">
    <location>
        <begin position="10"/>
        <end position="30"/>
    </location>
</feature>
<feature type="transmembrane region" description="Helical" evidence="2">
    <location>
        <begin position="32"/>
        <end position="52"/>
    </location>
</feature>
<feature type="transmembrane region" description="Helical" evidence="2">
    <location>
        <begin position="61"/>
        <end position="81"/>
    </location>
</feature>
<feature type="transmembrane region" description="Helical" evidence="2">
    <location>
        <begin position="92"/>
        <end position="112"/>
    </location>
</feature>
<feature type="transmembrane region" description="Helical" evidence="2">
    <location>
        <begin position="152"/>
        <end position="172"/>
    </location>
</feature>
<keyword id="KW-0150">Chloroplast</keyword>
<keyword id="KW-0472">Membrane</keyword>
<keyword id="KW-0520">NAD</keyword>
<keyword id="KW-0521">NADP</keyword>
<keyword id="KW-0934">Plastid</keyword>
<keyword id="KW-0618">Plastoquinone</keyword>
<keyword id="KW-0874">Quinone</keyword>
<keyword id="KW-0793">Thylakoid</keyword>
<keyword id="KW-1278">Translocase</keyword>
<keyword id="KW-0812">Transmembrane</keyword>
<keyword id="KW-1133">Transmembrane helix</keyword>
<keyword id="KW-0813">Transport</keyword>
<evidence type="ECO:0000250" key="1"/>
<evidence type="ECO:0000255" key="2"/>
<evidence type="ECO:0000305" key="3"/>
<name>NU6C_LOBMA</name>
<comment type="function">
    <text evidence="1">NDH shuttles electrons from NAD(P)H:plastoquinone, via FMN and iron-sulfur (Fe-S) centers, to quinones in the photosynthetic chain and possibly in a chloroplast respiratory chain. The immediate electron acceptor for the enzyme in this species is believed to be plastoquinone. Couples the redox reaction to proton translocation, and thus conserves the redox energy in a proton gradient (By similarity).</text>
</comment>
<comment type="catalytic activity">
    <reaction>
        <text>a plastoquinone + NADH + (n+1) H(+)(in) = a plastoquinol + NAD(+) + n H(+)(out)</text>
        <dbReference type="Rhea" id="RHEA:42608"/>
        <dbReference type="Rhea" id="RHEA-COMP:9561"/>
        <dbReference type="Rhea" id="RHEA-COMP:9562"/>
        <dbReference type="ChEBI" id="CHEBI:15378"/>
        <dbReference type="ChEBI" id="CHEBI:17757"/>
        <dbReference type="ChEBI" id="CHEBI:57540"/>
        <dbReference type="ChEBI" id="CHEBI:57945"/>
        <dbReference type="ChEBI" id="CHEBI:62192"/>
    </reaction>
</comment>
<comment type="catalytic activity">
    <reaction>
        <text>a plastoquinone + NADPH + (n+1) H(+)(in) = a plastoquinol + NADP(+) + n H(+)(out)</text>
        <dbReference type="Rhea" id="RHEA:42612"/>
        <dbReference type="Rhea" id="RHEA-COMP:9561"/>
        <dbReference type="Rhea" id="RHEA-COMP:9562"/>
        <dbReference type="ChEBI" id="CHEBI:15378"/>
        <dbReference type="ChEBI" id="CHEBI:17757"/>
        <dbReference type="ChEBI" id="CHEBI:57783"/>
        <dbReference type="ChEBI" id="CHEBI:58349"/>
        <dbReference type="ChEBI" id="CHEBI:62192"/>
    </reaction>
</comment>
<comment type="subunit">
    <text evidence="1">NDH is composed of at least 16 different subunits, 5 of which are encoded in the nucleus.</text>
</comment>
<comment type="subcellular location">
    <subcellularLocation>
        <location evidence="1">Plastid</location>
        <location evidence="1">Chloroplast thylakoid membrane</location>
        <topology evidence="1">Multi-pass membrane protein</topology>
    </subcellularLocation>
</comment>
<comment type="similarity">
    <text evidence="3">Belongs to the complex I subunit 6 family.</text>
</comment>
<dbReference type="EC" id="7.1.1.-"/>
<dbReference type="EMBL" id="AP009375">
    <property type="protein sequence ID" value="BAF50605.1"/>
    <property type="molecule type" value="Genomic_DNA"/>
</dbReference>
<dbReference type="RefSeq" id="YP_001123780.1">
    <property type="nucleotide sequence ID" value="NC_009274.1"/>
</dbReference>
<dbReference type="SMR" id="A4QLQ0"/>
<dbReference type="GeneID" id="4964865"/>
<dbReference type="GO" id="GO:0009535">
    <property type="term" value="C:chloroplast thylakoid membrane"/>
    <property type="evidence" value="ECO:0007669"/>
    <property type="project" value="UniProtKB-SubCell"/>
</dbReference>
<dbReference type="GO" id="GO:0008137">
    <property type="term" value="F:NADH dehydrogenase (ubiquinone) activity"/>
    <property type="evidence" value="ECO:0007669"/>
    <property type="project" value="InterPro"/>
</dbReference>
<dbReference type="GO" id="GO:0048038">
    <property type="term" value="F:quinone binding"/>
    <property type="evidence" value="ECO:0007669"/>
    <property type="project" value="UniProtKB-KW"/>
</dbReference>
<dbReference type="FunFam" id="1.20.120.1200:FF:000002">
    <property type="entry name" value="NAD(P)H-quinone oxidoreductase subunit 6, chloroplastic"/>
    <property type="match status" value="1"/>
</dbReference>
<dbReference type="Gene3D" id="1.20.120.1200">
    <property type="entry name" value="NADH-ubiquinone/plastoquinone oxidoreductase chain 6, subunit NuoJ"/>
    <property type="match status" value="1"/>
</dbReference>
<dbReference type="InterPro" id="IPR050290">
    <property type="entry name" value="NAD(P)H-Q_Oxidoreduct_6"/>
</dbReference>
<dbReference type="InterPro" id="IPR001457">
    <property type="entry name" value="NADH_UbQ/plastoQ_OxRdtase_su6"/>
</dbReference>
<dbReference type="InterPro" id="IPR042106">
    <property type="entry name" value="Nuo/plastoQ_OxRdtase_6_NuoJ"/>
</dbReference>
<dbReference type="PANTHER" id="PTHR48479">
    <property type="entry name" value="NAD(P)H-QUINONE OXIDOREDUCTASE SUBUNIT 6, CHLOROPLASTIC"/>
    <property type="match status" value="1"/>
</dbReference>
<dbReference type="PANTHER" id="PTHR48479:SF1">
    <property type="entry name" value="NAD(P)H-QUINONE OXIDOREDUCTASE SUBUNIT 6, CHLOROPLASTIC"/>
    <property type="match status" value="1"/>
</dbReference>
<dbReference type="Pfam" id="PF00499">
    <property type="entry name" value="Oxidored_q3"/>
    <property type="match status" value="1"/>
</dbReference>
<proteinExistence type="inferred from homology"/>
<sequence length="176" mass="19171">MDLPGPIHDFLLVFLGSGLLVGGLGVVLLPNPIFSAFSLGFVLVCISLLYILSNSHFVAAAQLLIYVGAINVLIIFAVMFMNDSEYSTDFNLWTVGDGITSLVCTTILFSLISTILDTSWYGVIWTTRLNQLLEQDLISNSQQIGIHLSTDFFLPFELISIILLVALVGAISVARQ</sequence>
<protein>
    <recommendedName>
        <fullName>NAD(P)H-quinone oxidoreductase subunit 6, chloroplastic</fullName>
        <ecNumber>7.1.1.-</ecNumber>
    </recommendedName>
    <alternativeName>
        <fullName>NAD(P)H dehydrogenase subunit 6</fullName>
    </alternativeName>
    <alternativeName>
        <fullName>NADH-plastoquinone oxidoreductase subunit 6</fullName>
    </alternativeName>
</protein>
<accession>A4QLQ0</accession>
<geneLocation type="chloroplast"/>
<gene>
    <name type="primary">ndhG</name>
</gene>
<organism>
    <name type="scientific">Lobularia maritima</name>
    <name type="common">Sweet alyssum</name>
    <name type="synonym">Alyssum maritimum</name>
    <dbReference type="NCBI Taxonomy" id="226051"/>
    <lineage>
        <taxon>Eukaryota</taxon>
        <taxon>Viridiplantae</taxon>
        <taxon>Streptophyta</taxon>
        <taxon>Embryophyta</taxon>
        <taxon>Tracheophyta</taxon>
        <taxon>Spermatophyta</taxon>
        <taxon>Magnoliopsida</taxon>
        <taxon>eudicotyledons</taxon>
        <taxon>Gunneridae</taxon>
        <taxon>Pentapetalae</taxon>
        <taxon>rosids</taxon>
        <taxon>malvids</taxon>
        <taxon>Brassicales</taxon>
        <taxon>Brassicaceae</taxon>
        <taxon>Anastaticeae</taxon>
        <taxon>Lobularia</taxon>
    </lineage>
</organism>